<keyword id="KW-0687">Ribonucleoprotein</keyword>
<keyword id="KW-0689">Ribosomal protein</keyword>
<keyword id="KW-0694">RNA-binding</keyword>
<keyword id="KW-0699">rRNA-binding</keyword>
<proteinExistence type="inferred from homology"/>
<accession>A1KRJ2</accession>
<comment type="function">
    <text evidence="1">Binds to the 23S rRNA.</text>
</comment>
<comment type="subunit">
    <text evidence="1">Part of the 50S ribosomal subunit.</text>
</comment>
<comment type="similarity">
    <text evidence="1">Belongs to the universal ribosomal protein uL15 family.</text>
</comment>
<feature type="chain" id="PRO_1000054500" description="Large ribosomal subunit protein uL15">
    <location>
        <begin position="1"/>
        <end position="144"/>
    </location>
</feature>
<feature type="region of interest" description="Disordered" evidence="2">
    <location>
        <begin position="20"/>
        <end position="49"/>
    </location>
</feature>
<feature type="compositionally biased region" description="Gly residues" evidence="2">
    <location>
        <begin position="21"/>
        <end position="31"/>
    </location>
</feature>
<gene>
    <name evidence="1" type="primary">rplO</name>
    <name type="ordered locus">NMC0151</name>
</gene>
<dbReference type="EMBL" id="AM421808">
    <property type="protein sequence ID" value="CAM09470.1"/>
    <property type="molecule type" value="Genomic_DNA"/>
</dbReference>
<dbReference type="RefSeq" id="WP_002215449.1">
    <property type="nucleotide sequence ID" value="NC_008767.1"/>
</dbReference>
<dbReference type="SMR" id="A1KRJ2"/>
<dbReference type="GeneID" id="93387236"/>
<dbReference type="KEGG" id="nmc:NMC0151"/>
<dbReference type="HOGENOM" id="CLU_055188_4_2_4"/>
<dbReference type="Proteomes" id="UP000002286">
    <property type="component" value="Chromosome"/>
</dbReference>
<dbReference type="GO" id="GO:0022625">
    <property type="term" value="C:cytosolic large ribosomal subunit"/>
    <property type="evidence" value="ECO:0007669"/>
    <property type="project" value="TreeGrafter"/>
</dbReference>
<dbReference type="GO" id="GO:0019843">
    <property type="term" value="F:rRNA binding"/>
    <property type="evidence" value="ECO:0007669"/>
    <property type="project" value="UniProtKB-UniRule"/>
</dbReference>
<dbReference type="GO" id="GO:0003735">
    <property type="term" value="F:structural constituent of ribosome"/>
    <property type="evidence" value="ECO:0007669"/>
    <property type="project" value="InterPro"/>
</dbReference>
<dbReference type="GO" id="GO:0006412">
    <property type="term" value="P:translation"/>
    <property type="evidence" value="ECO:0007669"/>
    <property type="project" value="UniProtKB-UniRule"/>
</dbReference>
<dbReference type="Gene3D" id="3.100.10.10">
    <property type="match status" value="1"/>
</dbReference>
<dbReference type="HAMAP" id="MF_01341">
    <property type="entry name" value="Ribosomal_uL15"/>
    <property type="match status" value="1"/>
</dbReference>
<dbReference type="InterPro" id="IPR030878">
    <property type="entry name" value="Ribosomal_uL15"/>
</dbReference>
<dbReference type="InterPro" id="IPR021131">
    <property type="entry name" value="Ribosomal_uL15/eL18"/>
</dbReference>
<dbReference type="InterPro" id="IPR036227">
    <property type="entry name" value="Ribosomal_uL15/eL18_sf"/>
</dbReference>
<dbReference type="InterPro" id="IPR005749">
    <property type="entry name" value="Ribosomal_uL15_bac-type"/>
</dbReference>
<dbReference type="InterPro" id="IPR001196">
    <property type="entry name" value="Ribosomal_uL15_CS"/>
</dbReference>
<dbReference type="NCBIfam" id="TIGR01071">
    <property type="entry name" value="rplO_bact"/>
    <property type="match status" value="1"/>
</dbReference>
<dbReference type="PANTHER" id="PTHR12934">
    <property type="entry name" value="50S RIBOSOMAL PROTEIN L15"/>
    <property type="match status" value="1"/>
</dbReference>
<dbReference type="PANTHER" id="PTHR12934:SF11">
    <property type="entry name" value="LARGE RIBOSOMAL SUBUNIT PROTEIN UL15M"/>
    <property type="match status" value="1"/>
</dbReference>
<dbReference type="Pfam" id="PF00828">
    <property type="entry name" value="Ribosomal_L27A"/>
    <property type="match status" value="1"/>
</dbReference>
<dbReference type="SUPFAM" id="SSF52080">
    <property type="entry name" value="Ribosomal proteins L15p and L18e"/>
    <property type="match status" value="1"/>
</dbReference>
<dbReference type="PROSITE" id="PS00475">
    <property type="entry name" value="RIBOSOMAL_L15"/>
    <property type="match status" value="1"/>
</dbReference>
<evidence type="ECO:0000255" key="1">
    <source>
        <dbReference type="HAMAP-Rule" id="MF_01341"/>
    </source>
</evidence>
<evidence type="ECO:0000256" key="2">
    <source>
        <dbReference type="SAM" id="MobiDB-lite"/>
    </source>
</evidence>
<evidence type="ECO:0000305" key="3"/>
<name>RL15_NEIMF</name>
<protein>
    <recommendedName>
        <fullName evidence="1">Large ribosomal subunit protein uL15</fullName>
    </recommendedName>
    <alternativeName>
        <fullName evidence="3">50S ribosomal protein L15</fullName>
    </alternativeName>
</protein>
<reference key="1">
    <citation type="journal article" date="2007" name="PLoS Genet.">
        <title>Meningococcal genetic variation mechanisms viewed through comparative analysis of serogroup C strain FAM18.</title>
        <authorList>
            <person name="Bentley S.D."/>
            <person name="Vernikos G.S."/>
            <person name="Snyder L.A.S."/>
            <person name="Churcher C."/>
            <person name="Arrowsmith C."/>
            <person name="Chillingworth T."/>
            <person name="Cronin A."/>
            <person name="Davis P.H."/>
            <person name="Holroyd N.E."/>
            <person name="Jagels K."/>
            <person name="Maddison M."/>
            <person name="Moule S."/>
            <person name="Rabbinowitsch E."/>
            <person name="Sharp S."/>
            <person name="Unwin L."/>
            <person name="Whitehead S."/>
            <person name="Quail M.A."/>
            <person name="Achtman M."/>
            <person name="Barrell B.G."/>
            <person name="Saunders N.J."/>
            <person name="Parkhill J."/>
        </authorList>
    </citation>
    <scope>NUCLEOTIDE SEQUENCE [LARGE SCALE GENOMIC DNA]</scope>
    <source>
        <strain>ATCC 700532 / DSM 15464 / FAM18</strain>
    </source>
</reference>
<organism>
    <name type="scientific">Neisseria meningitidis serogroup C / serotype 2a (strain ATCC 700532 / DSM 15464 / FAM18)</name>
    <dbReference type="NCBI Taxonomy" id="272831"/>
    <lineage>
        <taxon>Bacteria</taxon>
        <taxon>Pseudomonadati</taxon>
        <taxon>Pseudomonadota</taxon>
        <taxon>Betaproteobacteria</taxon>
        <taxon>Neisseriales</taxon>
        <taxon>Neisseriaceae</taxon>
        <taxon>Neisseria</taxon>
    </lineage>
</organism>
<sequence>MFLNTIQPAVGATHAGRRVGRGIGSGLGKTGGRGHKGQKSRSGGFHKVGFEGGQMPLQRRLPKRGFKSLTASANAQLRLSELESIAVNEIDILVLKQAGLIASTVSNVKVIASGEISKAVALKGIKVTKGARAAIEAVGGKIEM</sequence>